<gene>
    <name type="primary">Ube3d</name>
    <name type="synonym">H10bh</name>
    <name type="synonym">Ube2cbp</name>
</gene>
<accession>Q8BX13</accession>
<comment type="function">
    <text evidence="1">E3 ubiquitin-protein ligase which accepts ubiquitin from specific E2 ubiquitin-conjugating enzymes, and transfers it to substrates, generally promoting their degradation by the proteasome. Independently of its E3 ubiquitin-protein ligase activity, acts as an inhibitor of CPSF3 endonuclease activity by blocking CPSF3 active site.</text>
</comment>
<comment type="catalytic activity">
    <reaction evidence="1">
        <text>S-ubiquitinyl-[E2 ubiquitin-conjugating enzyme]-L-cysteine + [acceptor protein]-L-lysine = [E2 ubiquitin-conjugating enzyme]-L-cysteine + N(6)-ubiquitinyl-[acceptor protein]-L-lysine.</text>
        <dbReference type="EC" id="2.3.2.26"/>
    </reaction>
</comment>
<comment type="pathway">
    <text evidence="1">Protein modification; protein ubiquitination.</text>
</comment>
<comment type="subunit">
    <text evidence="1">Interacts with UBE2C/UbcH10 (E2 ubiquitin-conjugating enzyme). In vitro, interacts with cyclin-B.</text>
</comment>
<comment type="subcellular location">
    <subcellularLocation>
        <location evidence="1">Cytoplasm</location>
    </subcellularLocation>
</comment>
<comment type="domain">
    <text evidence="1">The C-terminal half (AA 188-389) is able to bind cyclin-B and shows a self-ubiquitination activity (mono-, poly, or multi-ubiquitination) in a HECT-like sequence dependent manner.</text>
</comment>
<comment type="domain">
    <text evidence="1">The BRAT1-like motif mediates inhibition of the endonuclease activity of CPSF3 by forming hyrogen bond and hydrophobic interactions with the active site of CPSF3: Cys-144 coordinates one of the two active site zinc ions of CPSF3.</text>
</comment>
<comment type="PTM">
    <text evidence="1">Ubiquitinated by UBCH10 (E2 ubiquitin-conjugating enzyme).</text>
</comment>
<evidence type="ECO:0000250" key="1">
    <source>
        <dbReference type="UniProtKB" id="Q7Z6J8"/>
    </source>
</evidence>
<evidence type="ECO:0000305" key="2"/>
<organism>
    <name type="scientific">Mus musculus</name>
    <name type="common">Mouse</name>
    <dbReference type="NCBI Taxonomy" id="10090"/>
    <lineage>
        <taxon>Eukaryota</taxon>
        <taxon>Metazoa</taxon>
        <taxon>Chordata</taxon>
        <taxon>Craniata</taxon>
        <taxon>Vertebrata</taxon>
        <taxon>Euteleostomi</taxon>
        <taxon>Mammalia</taxon>
        <taxon>Eutheria</taxon>
        <taxon>Euarchontoglires</taxon>
        <taxon>Glires</taxon>
        <taxon>Rodentia</taxon>
        <taxon>Myomorpha</taxon>
        <taxon>Muroidea</taxon>
        <taxon>Muridae</taxon>
        <taxon>Murinae</taxon>
        <taxon>Mus</taxon>
        <taxon>Mus</taxon>
    </lineage>
</organism>
<protein>
    <recommendedName>
        <fullName>E3 ubiquitin-protein ligase E3D</fullName>
        <ecNumber>2.3.2.26</ecNumber>
    </recommendedName>
    <alternativeName>
        <fullName evidence="2">HECT-type E3 ubiquitin transferase E3D</fullName>
    </alternativeName>
    <alternativeName>
        <fullName>UbcH10-binding protein with a HECT-like domain</fullName>
    </alternativeName>
    <alternativeName>
        <fullName>Ubiquitin-conjugating enzyme E2C-binding protein</fullName>
    </alternativeName>
</protein>
<sequence length="368" mass="40753">MAVAAAETRVFLEVRRRLQSALLILGGPDEGGMHLDISITPTSLLVRTPDGCTEIRLPAGVRLVPSSCGGLQYISGDGLHLRLRVQAESSPQPISVFNQSLQAQECCTFYCQSCGEVTIKDRKLLRVLPLPSENWSALVGEWCCHPDPFANRPLHPRENDCFIGDSFFLVNLKSDLEQEPKANTKVICKRCKVTLGETMSSETTKFYMTEVIIRPSEGSFPNIPRSQFLQSIIAQCLVELSSARSTFRFTIQGQDGKVYILLWVLNSDSLVIEPLRSSSCSRKFPLLESSLEAGSGSAWNAIKVLYQPCIKSRNKELASSWEGDISVHPLTLPSATCLELLLILSRNNASLPLSLRQMNSFQVAFLKM</sequence>
<name>UBE3D_MOUSE</name>
<keyword id="KW-0007">Acetylation</keyword>
<keyword id="KW-0963">Cytoplasm</keyword>
<keyword id="KW-0479">Metal-binding</keyword>
<keyword id="KW-1185">Reference proteome</keyword>
<keyword id="KW-0808">Transferase</keyword>
<keyword id="KW-0832">Ubl conjugation</keyword>
<keyword id="KW-0833">Ubl conjugation pathway</keyword>
<keyword id="KW-0862">Zinc</keyword>
<feature type="initiator methionine" description="Removed" evidence="1">
    <location>
        <position position="1"/>
    </location>
</feature>
<feature type="chain" id="PRO_0000311191" description="E3 ubiquitin-protein ligase E3D">
    <location>
        <begin position="2"/>
        <end position="368"/>
    </location>
</feature>
<feature type="region of interest" description="Interaction with UBE2C" evidence="1">
    <location>
        <begin position="214"/>
        <end position="236"/>
    </location>
</feature>
<feature type="region of interest" description="HECT-like" evidence="1">
    <location>
        <begin position="332"/>
        <end position="368"/>
    </location>
</feature>
<feature type="short sequence motif" description="BRAT1-like motif" evidence="1">
    <location>
        <begin position="129"/>
        <end position="159"/>
    </location>
</feature>
<feature type="binding site" evidence="1">
    <location>
        <position position="144"/>
    </location>
    <ligand>
        <name>Zn(2+)</name>
        <dbReference type="ChEBI" id="CHEBI:29105"/>
    </ligand>
</feature>
<feature type="modified residue" description="N-acetylalanine" evidence="1">
    <location>
        <position position="2"/>
    </location>
</feature>
<dbReference type="EC" id="2.3.2.26"/>
<dbReference type="EMBL" id="AK049229">
    <property type="protein sequence ID" value="BAC33623.1"/>
    <property type="molecule type" value="mRNA"/>
</dbReference>
<dbReference type="EMBL" id="BC115686">
    <property type="protein sequence ID" value="AAI15687.1"/>
    <property type="molecule type" value="mRNA"/>
</dbReference>
<dbReference type="EMBL" id="BC115687">
    <property type="protein sequence ID" value="AAI15688.1"/>
    <property type="molecule type" value="mRNA"/>
</dbReference>
<dbReference type="CCDS" id="CCDS40713.1"/>
<dbReference type="RefSeq" id="NP_081670.1">
    <property type="nucleotide sequence ID" value="NM_027394.3"/>
</dbReference>
<dbReference type="FunCoup" id="Q8BX13">
    <property type="interactions" value="1770"/>
</dbReference>
<dbReference type="STRING" id="10090.ENSMUSP00000034986"/>
<dbReference type="PhosphoSitePlus" id="Q8BX13"/>
<dbReference type="PaxDb" id="10090-ENSMUSP00000034986"/>
<dbReference type="ProteomicsDB" id="297788"/>
<dbReference type="Antibodypedia" id="18484">
    <property type="antibodies" value="10 antibodies from 8 providers"/>
</dbReference>
<dbReference type="Ensembl" id="ENSMUST00000034986.14">
    <property type="protein sequence ID" value="ENSMUSP00000034986.8"/>
    <property type="gene ID" value="ENSMUSG00000032415.15"/>
</dbReference>
<dbReference type="GeneID" id="70348"/>
<dbReference type="KEGG" id="mmu:70348"/>
<dbReference type="UCSC" id="uc009qxc.1">
    <property type="organism name" value="mouse"/>
</dbReference>
<dbReference type="AGR" id="MGI:1917598"/>
<dbReference type="CTD" id="90025"/>
<dbReference type="MGI" id="MGI:1917598">
    <property type="gene designation" value="Ube3d"/>
</dbReference>
<dbReference type="VEuPathDB" id="HostDB:ENSMUSG00000032415"/>
<dbReference type="eggNOG" id="KOG4784">
    <property type="taxonomic scope" value="Eukaryota"/>
</dbReference>
<dbReference type="GeneTree" id="ENSGT00390000003986"/>
<dbReference type="HOGENOM" id="CLU_060972_0_0_1"/>
<dbReference type="InParanoid" id="Q8BX13"/>
<dbReference type="OMA" id="DCFTGDS"/>
<dbReference type="OrthoDB" id="66510at2759"/>
<dbReference type="PhylomeDB" id="Q8BX13"/>
<dbReference type="TreeFam" id="TF324684"/>
<dbReference type="Reactome" id="R-MMU-983168">
    <property type="pathway name" value="Antigen processing: Ubiquitination &amp; Proteasome degradation"/>
</dbReference>
<dbReference type="UniPathway" id="UPA00143"/>
<dbReference type="BioGRID-ORCS" id="70348">
    <property type="hits" value="14 hits in 78 CRISPR screens"/>
</dbReference>
<dbReference type="ChiTaRS" id="Ube2cbp">
    <property type="organism name" value="mouse"/>
</dbReference>
<dbReference type="PRO" id="PR:Q8BX13"/>
<dbReference type="Proteomes" id="UP000000589">
    <property type="component" value="Chromosome 9"/>
</dbReference>
<dbReference type="RNAct" id="Q8BX13">
    <property type="molecule type" value="protein"/>
</dbReference>
<dbReference type="Bgee" id="ENSMUSG00000032415">
    <property type="expression patterns" value="Expressed in floor plate of midbrain and 118 other cell types or tissues"/>
</dbReference>
<dbReference type="ExpressionAtlas" id="Q8BX13">
    <property type="expression patterns" value="baseline and differential"/>
</dbReference>
<dbReference type="GO" id="GO:0005829">
    <property type="term" value="C:cytosol"/>
    <property type="evidence" value="ECO:0007669"/>
    <property type="project" value="Ensembl"/>
</dbReference>
<dbReference type="GO" id="GO:0000151">
    <property type="term" value="C:ubiquitin ligase complex"/>
    <property type="evidence" value="ECO:0007669"/>
    <property type="project" value="Ensembl"/>
</dbReference>
<dbReference type="GO" id="GO:0030332">
    <property type="term" value="F:cyclin binding"/>
    <property type="evidence" value="ECO:0007669"/>
    <property type="project" value="Ensembl"/>
</dbReference>
<dbReference type="GO" id="GO:0008428">
    <property type="term" value="F:ribonuclease inhibitor activity"/>
    <property type="evidence" value="ECO:0007669"/>
    <property type="project" value="Ensembl"/>
</dbReference>
<dbReference type="GO" id="GO:0061630">
    <property type="term" value="F:ubiquitin protein ligase activity"/>
    <property type="evidence" value="ECO:0007669"/>
    <property type="project" value="Ensembl"/>
</dbReference>
<dbReference type="GO" id="GO:0044390">
    <property type="term" value="F:ubiquitin-like protein conjugating enzyme binding"/>
    <property type="evidence" value="ECO:0007669"/>
    <property type="project" value="Ensembl"/>
</dbReference>
<dbReference type="GO" id="GO:0051865">
    <property type="term" value="P:protein autoubiquitination"/>
    <property type="evidence" value="ECO:0007669"/>
    <property type="project" value="Ensembl"/>
</dbReference>
<dbReference type="GO" id="GO:0006513">
    <property type="term" value="P:protein monoubiquitination"/>
    <property type="evidence" value="ECO:0007669"/>
    <property type="project" value="Ensembl"/>
</dbReference>
<dbReference type="GO" id="GO:0000209">
    <property type="term" value="P:protein polyubiquitination"/>
    <property type="evidence" value="ECO:0007669"/>
    <property type="project" value="Ensembl"/>
</dbReference>
<dbReference type="InterPro" id="IPR019193">
    <property type="entry name" value="UBQ-conj_enz_E2-bd_prot"/>
</dbReference>
<dbReference type="PANTHER" id="PTHR31531:SF2">
    <property type="entry name" value="E3 UBIQUITIN-PROTEIN LIGASE E3D"/>
    <property type="match status" value="1"/>
</dbReference>
<dbReference type="PANTHER" id="PTHR31531">
    <property type="entry name" value="E3 UBIQUITIN-PROTEIN LIGASE E3D FAMILY MEMBER"/>
    <property type="match status" value="1"/>
</dbReference>
<dbReference type="Pfam" id="PF09814">
    <property type="entry name" value="HECT_2"/>
    <property type="match status" value="1"/>
</dbReference>
<reference key="1">
    <citation type="journal article" date="2005" name="Science">
        <title>The transcriptional landscape of the mammalian genome.</title>
        <authorList>
            <person name="Carninci P."/>
            <person name="Kasukawa T."/>
            <person name="Katayama S."/>
            <person name="Gough J."/>
            <person name="Frith M.C."/>
            <person name="Maeda N."/>
            <person name="Oyama R."/>
            <person name="Ravasi T."/>
            <person name="Lenhard B."/>
            <person name="Wells C."/>
            <person name="Kodzius R."/>
            <person name="Shimokawa K."/>
            <person name="Bajic V.B."/>
            <person name="Brenner S.E."/>
            <person name="Batalov S."/>
            <person name="Forrest A.R."/>
            <person name="Zavolan M."/>
            <person name="Davis M.J."/>
            <person name="Wilming L.G."/>
            <person name="Aidinis V."/>
            <person name="Allen J.E."/>
            <person name="Ambesi-Impiombato A."/>
            <person name="Apweiler R."/>
            <person name="Aturaliya R.N."/>
            <person name="Bailey T.L."/>
            <person name="Bansal M."/>
            <person name="Baxter L."/>
            <person name="Beisel K.W."/>
            <person name="Bersano T."/>
            <person name="Bono H."/>
            <person name="Chalk A.M."/>
            <person name="Chiu K.P."/>
            <person name="Choudhary V."/>
            <person name="Christoffels A."/>
            <person name="Clutterbuck D.R."/>
            <person name="Crowe M.L."/>
            <person name="Dalla E."/>
            <person name="Dalrymple B.P."/>
            <person name="de Bono B."/>
            <person name="Della Gatta G."/>
            <person name="di Bernardo D."/>
            <person name="Down T."/>
            <person name="Engstrom P."/>
            <person name="Fagiolini M."/>
            <person name="Faulkner G."/>
            <person name="Fletcher C.F."/>
            <person name="Fukushima T."/>
            <person name="Furuno M."/>
            <person name="Futaki S."/>
            <person name="Gariboldi M."/>
            <person name="Georgii-Hemming P."/>
            <person name="Gingeras T.R."/>
            <person name="Gojobori T."/>
            <person name="Green R.E."/>
            <person name="Gustincich S."/>
            <person name="Harbers M."/>
            <person name="Hayashi Y."/>
            <person name="Hensch T.K."/>
            <person name="Hirokawa N."/>
            <person name="Hill D."/>
            <person name="Huminiecki L."/>
            <person name="Iacono M."/>
            <person name="Ikeo K."/>
            <person name="Iwama A."/>
            <person name="Ishikawa T."/>
            <person name="Jakt M."/>
            <person name="Kanapin A."/>
            <person name="Katoh M."/>
            <person name="Kawasawa Y."/>
            <person name="Kelso J."/>
            <person name="Kitamura H."/>
            <person name="Kitano H."/>
            <person name="Kollias G."/>
            <person name="Krishnan S.P."/>
            <person name="Kruger A."/>
            <person name="Kummerfeld S.K."/>
            <person name="Kurochkin I.V."/>
            <person name="Lareau L.F."/>
            <person name="Lazarevic D."/>
            <person name="Lipovich L."/>
            <person name="Liu J."/>
            <person name="Liuni S."/>
            <person name="McWilliam S."/>
            <person name="Madan Babu M."/>
            <person name="Madera M."/>
            <person name="Marchionni L."/>
            <person name="Matsuda H."/>
            <person name="Matsuzawa S."/>
            <person name="Miki H."/>
            <person name="Mignone F."/>
            <person name="Miyake S."/>
            <person name="Morris K."/>
            <person name="Mottagui-Tabar S."/>
            <person name="Mulder N."/>
            <person name="Nakano N."/>
            <person name="Nakauchi H."/>
            <person name="Ng P."/>
            <person name="Nilsson R."/>
            <person name="Nishiguchi S."/>
            <person name="Nishikawa S."/>
            <person name="Nori F."/>
            <person name="Ohara O."/>
            <person name="Okazaki Y."/>
            <person name="Orlando V."/>
            <person name="Pang K.C."/>
            <person name="Pavan W.J."/>
            <person name="Pavesi G."/>
            <person name="Pesole G."/>
            <person name="Petrovsky N."/>
            <person name="Piazza S."/>
            <person name="Reed J."/>
            <person name="Reid J.F."/>
            <person name="Ring B.Z."/>
            <person name="Ringwald M."/>
            <person name="Rost B."/>
            <person name="Ruan Y."/>
            <person name="Salzberg S.L."/>
            <person name="Sandelin A."/>
            <person name="Schneider C."/>
            <person name="Schoenbach C."/>
            <person name="Sekiguchi K."/>
            <person name="Semple C.A."/>
            <person name="Seno S."/>
            <person name="Sessa L."/>
            <person name="Sheng Y."/>
            <person name="Shibata Y."/>
            <person name="Shimada H."/>
            <person name="Shimada K."/>
            <person name="Silva D."/>
            <person name="Sinclair B."/>
            <person name="Sperling S."/>
            <person name="Stupka E."/>
            <person name="Sugiura K."/>
            <person name="Sultana R."/>
            <person name="Takenaka Y."/>
            <person name="Taki K."/>
            <person name="Tammoja K."/>
            <person name="Tan S.L."/>
            <person name="Tang S."/>
            <person name="Taylor M.S."/>
            <person name="Tegner J."/>
            <person name="Teichmann S.A."/>
            <person name="Ueda H.R."/>
            <person name="van Nimwegen E."/>
            <person name="Verardo R."/>
            <person name="Wei C.L."/>
            <person name="Yagi K."/>
            <person name="Yamanishi H."/>
            <person name="Zabarovsky E."/>
            <person name="Zhu S."/>
            <person name="Zimmer A."/>
            <person name="Hide W."/>
            <person name="Bult C."/>
            <person name="Grimmond S.M."/>
            <person name="Teasdale R.D."/>
            <person name="Liu E.T."/>
            <person name="Brusic V."/>
            <person name="Quackenbush J."/>
            <person name="Wahlestedt C."/>
            <person name="Mattick J.S."/>
            <person name="Hume D.A."/>
            <person name="Kai C."/>
            <person name="Sasaki D."/>
            <person name="Tomaru Y."/>
            <person name="Fukuda S."/>
            <person name="Kanamori-Katayama M."/>
            <person name="Suzuki M."/>
            <person name="Aoki J."/>
            <person name="Arakawa T."/>
            <person name="Iida J."/>
            <person name="Imamura K."/>
            <person name="Itoh M."/>
            <person name="Kato T."/>
            <person name="Kawaji H."/>
            <person name="Kawagashira N."/>
            <person name="Kawashima T."/>
            <person name="Kojima M."/>
            <person name="Kondo S."/>
            <person name="Konno H."/>
            <person name="Nakano K."/>
            <person name="Ninomiya N."/>
            <person name="Nishio T."/>
            <person name="Okada M."/>
            <person name="Plessy C."/>
            <person name="Shibata K."/>
            <person name="Shiraki T."/>
            <person name="Suzuki S."/>
            <person name="Tagami M."/>
            <person name="Waki K."/>
            <person name="Watahiki A."/>
            <person name="Okamura-Oho Y."/>
            <person name="Suzuki H."/>
            <person name="Kawai J."/>
            <person name="Hayashizaki Y."/>
        </authorList>
    </citation>
    <scope>NUCLEOTIDE SEQUENCE [LARGE SCALE MRNA]</scope>
    <source>
        <strain>C57BL/6J</strain>
    </source>
</reference>
<reference key="2">
    <citation type="journal article" date="2004" name="Genome Res.">
        <title>The status, quality, and expansion of the NIH full-length cDNA project: the Mammalian Gene Collection (MGC).</title>
        <authorList>
            <consortium name="The MGC Project Team"/>
        </authorList>
    </citation>
    <scope>NUCLEOTIDE SEQUENCE [LARGE SCALE MRNA]</scope>
</reference>
<proteinExistence type="evidence at transcript level"/>